<keyword id="KW-0067">ATP-binding</keyword>
<keyword id="KW-0963">Cytoplasm</keyword>
<keyword id="KW-0324">Glycolysis</keyword>
<keyword id="KW-0418">Kinase</keyword>
<keyword id="KW-0547">Nucleotide-binding</keyword>
<keyword id="KW-1185">Reference proteome</keyword>
<keyword id="KW-0808">Transferase</keyword>
<proteinExistence type="inferred from homology"/>
<feature type="chain" id="PRO_1000192787" description="Phosphoglycerate kinase">
    <location>
        <begin position="1"/>
        <end position="401"/>
    </location>
</feature>
<feature type="binding site" evidence="1">
    <location>
        <begin position="21"/>
        <end position="23"/>
    </location>
    <ligand>
        <name>substrate</name>
    </ligand>
</feature>
<feature type="binding site" evidence="1">
    <location>
        <position position="37"/>
    </location>
    <ligand>
        <name>substrate</name>
    </ligand>
</feature>
<feature type="binding site" evidence="1">
    <location>
        <begin position="60"/>
        <end position="63"/>
    </location>
    <ligand>
        <name>substrate</name>
    </ligand>
</feature>
<feature type="binding site" evidence="1">
    <location>
        <position position="119"/>
    </location>
    <ligand>
        <name>substrate</name>
    </ligand>
</feature>
<feature type="binding site" evidence="1">
    <location>
        <position position="152"/>
    </location>
    <ligand>
        <name>substrate</name>
    </ligand>
</feature>
<feature type="binding site" evidence="1">
    <location>
        <position position="203"/>
    </location>
    <ligand>
        <name>ATP</name>
        <dbReference type="ChEBI" id="CHEBI:30616"/>
    </ligand>
</feature>
<feature type="binding site" evidence="1">
    <location>
        <position position="325"/>
    </location>
    <ligand>
        <name>ATP</name>
        <dbReference type="ChEBI" id="CHEBI:30616"/>
    </ligand>
</feature>
<feature type="binding site" evidence="1">
    <location>
        <begin position="351"/>
        <end position="354"/>
    </location>
    <ligand>
        <name>ATP</name>
        <dbReference type="ChEBI" id="CHEBI:30616"/>
    </ligand>
</feature>
<name>PGK_ACIF2</name>
<accession>B7JBC8</accession>
<organism>
    <name type="scientific">Acidithiobacillus ferrooxidans (strain ATCC 23270 / DSM 14882 / CIP 104768 / NCIMB 8455)</name>
    <name type="common">Ferrobacillus ferrooxidans (strain ATCC 23270)</name>
    <dbReference type="NCBI Taxonomy" id="243159"/>
    <lineage>
        <taxon>Bacteria</taxon>
        <taxon>Pseudomonadati</taxon>
        <taxon>Pseudomonadota</taxon>
        <taxon>Acidithiobacillia</taxon>
        <taxon>Acidithiobacillales</taxon>
        <taxon>Acidithiobacillaceae</taxon>
        <taxon>Acidithiobacillus</taxon>
    </lineage>
</organism>
<evidence type="ECO:0000255" key="1">
    <source>
        <dbReference type="HAMAP-Rule" id="MF_00145"/>
    </source>
</evidence>
<sequence length="401" mass="41932">MNVLRMMDVPLKGKRVLIREDLNVPMNDAGAITDDTRIRASLPTIRAALASGARVMLMSHLGRPKEGVFDEKASLAPVAAHLSQLLGRDVPLVRDWLDAGKDRLAQLQDGDVVVLENVRFNTGESKDDEALSKKMAALCDVFVMDAFGTAHRAQASTHGVGKFAPVACAGPLLVNELDALGKALQNPRRPLVAIVAGSKVSTKLTILKSLADKVDQLVVGGGIANTFILAAGHSVGKSLCEADLVPDAQAIIAAARAKGGDVPLPSDVVVAKAFSETAPARTCRVDDIAADDMVLDIGPDTAKTLGDILRKAGTIVWNGPVGVFEFDAFAGGTEAIARAVAESSAFSIAGGGDTIAAINKFHIEDKVSYISTGGGAFLEFLEGKTLPAVAMLEERARGTHT</sequence>
<protein>
    <recommendedName>
        <fullName evidence="1">Phosphoglycerate kinase</fullName>
        <ecNumber evidence="1">2.7.2.3</ecNumber>
    </recommendedName>
</protein>
<gene>
    <name evidence="1" type="primary">pgk</name>
    <name type="ordered locus">AFE_3250</name>
</gene>
<comment type="catalytic activity">
    <reaction evidence="1">
        <text>(2R)-3-phosphoglycerate + ATP = (2R)-3-phospho-glyceroyl phosphate + ADP</text>
        <dbReference type="Rhea" id="RHEA:14801"/>
        <dbReference type="ChEBI" id="CHEBI:30616"/>
        <dbReference type="ChEBI" id="CHEBI:57604"/>
        <dbReference type="ChEBI" id="CHEBI:58272"/>
        <dbReference type="ChEBI" id="CHEBI:456216"/>
        <dbReference type="EC" id="2.7.2.3"/>
    </reaction>
</comment>
<comment type="pathway">
    <text evidence="1">Carbohydrate degradation; glycolysis; pyruvate from D-glyceraldehyde 3-phosphate: step 2/5.</text>
</comment>
<comment type="subunit">
    <text evidence="1">Monomer.</text>
</comment>
<comment type="subcellular location">
    <subcellularLocation>
        <location evidence="1">Cytoplasm</location>
    </subcellularLocation>
</comment>
<comment type="similarity">
    <text evidence="1">Belongs to the phosphoglycerate kinase family.</text>
</comment>
<reference key="1">
    <citation type="journal article" date="2008" name="BMC Genomics">
        <title>Acidithiobacillus ferrooxidans metabolism: from genome sequence to industrial applications.</title>
        <authorList>
            <person name="Valdes J."/>
            <person name="Pedroso I."/>
            <person name="Quatrini R."/>
            <person name="Dodson R.J."/>
            <person name="Tettelin H."/>
            <person name="Blake R. II"/>
            <person name="Eisen J.A."/>
            <person name="Holmes D.S."/>
        </authorList>
    </citation>
    <scope>NUCLEOTIDE SEQUENCE [LARGE SCALE GENOMIC DNA]</scope>
    <source>
        <strain>ATCC 23270 / DSM 14882 / CIP 104768 / NCIMB 8455</strain>
    </source>
</reference>
<dbReference type="EC" id="2.7.2.3" evidence="1"/>
<dbReference type="EMBL" id="CP001219">
    <property type="protein sequence ID" value="ACK79414.1"/>
    <property type="molecule type" value="Genomic_DNA"/>
</dbReference>
<dbReference type="RefSeq" id="WP_012537677.1">
    <property type="nucleotide sequence ID" value="NC_011761.1"/>
</dbReference>
<dbReference type="SMR" id="B7JBC8"/>
<dbReference type="STRING" id="243159.AFE_3250"/>
<dbReference type="PaxDb" id="243159-AFE_3250"/>
<dbReference type="GeneID" id="65282230"/>
<dbReference type="KEGG" id="afr:AFE_3250"/>
<dbReference type="eggNOG" id="COG0126">
    <property type="taxonomic scope" value="Bacteria"/>
</dbReference>
<dbReference type="HOGENOM" id="CLU_025427_0_2_6"/>
<dbReference type="UniPathway" id="UPA00109">
    <property type="reaction ID" value="UER00185"/>
</dbReference>
<dbReference type="Proteomes" id="UP000001362">
    <property type="component" value="Chromosome"/>
</dbReference>
<dbReference type="GO" id="GO:0005829">
    <property type="term" value="C:cytosol"/>
    <property type="evidence" value="ECO:0007669"/>
    <property type="project" value="TreeGrafter"/>
</dbReference>
<dbReference type="GO" id="GO:0043531">
    <property type="term" value="F:ADP binding"/>
    <property type="evidence" value="ECO:0007669"/>
    <property type="project" value="TreeGrafter"/>
</dbReference>
<dbReference type="GO" id="GO:0005524">
    <property type="term" value="F:ATP binding"/>
    <property type="evidence" value="ECO:0007669"/>
    <property type="project" value="UniProtKB-KW"/>
</dbReference>
<dbReference type="GO" id="GO:0004618">
    <property type="term" value="F:phosphoglycerate kinase activity"/>
    <property type="evidence" value="ECO:0007669"/>
    <property type="project" value="UniProtKB-UniRule"/>
</dbReference>
<dbReference type="GO" id="GO:0006094">
    <property type="term" value="P:gluconeogenesis"/>
    <property type="evidence" value="ECO:0007669"/>
    <property type="project" value="TreeGrafter"/>
</dbReference>
<dbReference type="GO" id="GO:0006096">
    <property type="term" value="P:glycolytic process"/>
    <property type="evidence" value="ECO:0007669"/>
    <property type="project" value="UniProtKB-UniRule"/>
</dbReference>
<dbReference type="FunFam" id="3.40.50.1260:FF:000001">
    <property type="entry name" value="Phosphoglycerate kinase"/>
    <property type="match status" value="1"/>
</dbReference>
<dbReference type="FunFam" id="3.40.50.1260:FF:000002">
    <property type="entry name" value="Phosphoglycerate kinase"/>
    <property type="match status" value="1"/>
</dbReference>
<dbReference type="Gene3D" id="3.40.50.1260">
    <property type="entry name" value="Phosphoglycerate kinase, N-terminal domain"/>
    <property type="match status" value="2"/>
</dbReference>
<dbReference type="HAMAP" id="MF_00145">
    <property type="entry name" value="Phosphoglyc_kinase"/>
    <property type="match status" value="1"/>
</dbReference>
<dbReference type="InterPro" id="IPR001576">
    <property type="entry name" value="Phosphoglycerate_kinase"/>
</dbReference>
<dbReference type="InterPro" id="IPR015911">
    <property type="entry name" value="Phosphoglycerate_kinase_CS"/>
</dbReference>
<dbReference type="InterPro" id="IPR015824">
    <property type="entry name" value="Phosphoglycerate_kinase_N"/>
</dbReference>
<dbReference type="InterPro" id="IPR036043">
    <property type="entry name" value="Phosphoglycerate_kinase_sf"/>
</dbReference>
<dbReference type="PANTHER" id="PTHR11406">
    <property type="entry name" value="PHOSPHOGLYCERATE KINASE"/>
    <property type="match status" value="1"/>
</dbReference>
<dbReference type="PANTHER" id="PTHR11406:SF23">
    <property type="entry name" value="PHOSPHOGLYCERATE KINASE 1, CHLOROPLASTIC-RELATED"/>
    <property type="match status" value="1"/>
</dbReference>
<dbReference type="Pfam" id="PF00162">
    <property type="entry name" value="PGK"/>
    <property type="match status" value="1"/>
</dbReference>
<dbReference type="PIRSF" id="PIRSF000724">
    <property type="entry name" value="Pgk"/>
    <property type="match status" value="1"/>
</dbReference>
<dbReference type="PRINTS" id="PR00477">
    <property type="entry name" value="PHGLYCKINASE"/>
</dbReference>
<dbReference type="SUPFAM" id="SSF53748">
    <property type="entry name" value="Phosphoglycerate kinase"/>
    <property type="match status" value="1"/>
</dbReference>
<dbReference type="PROSITE" id="PS00111">
    <property type="entry name" value="PGLYCERATE_KINASE"/>
    <property type="match status" value="1"/>
</dbReference>